<comment type="function">
    <text evidence="1">Involved in protein export. Acts as a chaperone by maintaining the newly synthesized protein in an open conformation. Functions as a peptidyl-prolyl cis-trans isomerase.</text>
</comment>
<comment type="catalytic activity">
    <reaction evidence="1">
        <text>[protein]-peptidylproline (omega=180) = [protein]-peptidylproline (omega=0)</text>
        <dbReference type="Rhea" id="RHEA:16237"/>
        <dbReference type="Rhea" id="RHEA-COMP:10747"/>
        <dbReference type="Rhea" id="RHEA-COMP:10748"/>
        <dbReference type="ChEBI" id="CHEBI:83833"/>
        <dbReference type="ChEBI" id="CHEBI:83834"/>
        <dbReference type="EC" id="5.2.1.8"/>
    </reaction>
</comment>
<comment type="subcellular location">
    <subcellularLocation>
        <location>Cytoplasm</location>
    </subcellularLocation>
    <text evidence="1">About half TF is bound to the ribosome near the polypeptide exit tunnel while the other half is free in the cytoplasm.</text>
</comment>
<comment type="domain">
    <text evidence="1">Consists of 3 domains; the N-terminus binds the ribosome, the middle domain has PPIase activity, while the C-terminus has intrinsic chaperone activity on its own.</text>
</comment>
<comment type="similarity">
    <text evidence="1">Belongs to the FKBP-type PPIase family. Tig subfamily.</text>
</comment>
<proteinExistence type="inferred from homology"/>
<accession>Q7NUY8</accession>
<keyword id="KW-0131">Cell cycle</keyword>
<keyword id="KW-0132">Cell division</keyword>
<keyword id="KW-0143">Chaperone</keyword>
<keyword id="KW-0963">Cytoplasm</keyword>
<keyword id="KW-0413">Isomerase</keyword>
<keyword id="KW-1185">Reference proteome</keyword>
<keyword id="KW-0697">Rotamase</keyword>
<evidence type="ECO:0000255" key="1">
    <source>
        <dbReference type="HAMAP-Rule" id="MF_00303"/>
    </source>
</evidence>
<reference key="1">
    <citation type="journal article" date="2003" name="Proc. Natl. Acad. Sci. U.S.A.">
        <title>The complete genome sequence of Chromobacterium violaceum reveals remarkable and exploitable bacterial adaptability.</title>
        <authorList>
            <person name="Vasconcelos A.T.R."/>
            <person name="de Almeida D.F."/>
            <person name="Hungria M."/>
            <person name="Guimaraes C.T."/>
            <person name="Antonio R.V."/>
            <person name="Almeida F.C."/>
            <person name="de Almeida L.G.P."/>
            <person name="de Almeida R."/>
            <person name="Alves-Gomes J.A."/>
            <person name="Andrade E.M."/>
            <person name="Araripe J."/>
            <person name="de Araujo M.F.F."/>
            <person name="Astolfi-Filho S."/>
            <person name="Azevedo V."/>
            <person name="Baptista A.J."/>
            <person name="Bataus L.A.M."/>
            <person name="Batista J.S."/>
            <person name="Belo A."/>
            <person name="van den Berg C."/>
            <person name="Bogo M."/>
            <person name="Bonatto S."/>
            <person name="Bordignon J."/>
            <person name="Brigido M.M."/>
            <person name="Brito C.A."/>
            <person name="Brocchi M."/>
            <person name="Burity H.A."/>
            <person name="Camargo A.A."/>
            <person name="Cardoso D.D.P."/>
            <person name="Carneiro N.P."/>
            <person name="Carraro D.M."/>
            <person name="Carvalho C.M.B."/>
            <person name="Cascardo J.C.M."/>
            <person name="Cavada B.S."/>
            <person name="Chueire L.M.O."/>
            <person name="Creczynski-Pasa T.B."/>
            <person name="Cunha-Junior N.C."/>
            <person name="Fagundes N."/>
            <person name="Falcao C.L."/>
            <person name="Fantinatti F."/>
            <person name="Farias I.P."/>
            <person name="Felipe M.S.S."/>
            <person name="Ferrari L.P."/>
            <person name="Ferro J.A."/>
            <person name="Ferro M.I.T."/>
            <person name="Franco G.R."/>
            <person name="Freitas N.S.A."/>
            <person name="Furlan L.R."/>
            <person name="Gazzinelli R.T."/>
            <person name="Gomes E.A."/>
            <person name="Goncalves P.R."/>
            <person name="Grangeiro T.B."/>
            <person name="Grattapaglia D."/>
            <person name="Grisard E.C."/>
            <person name="Hanna E.S."/>
            <person name="Jardim S.N."/>
            <person name="Laurino J."/>
            <person name="Leoi L.C.T."/>
            <person name="Lima L.F.A."/>
            <person name="Loureiro M.F."/>
            <person name="Lyra M.C.C.P."/>
            <person name="Madeira H.M.F."/>
            <person name="Manfio G.P."/>
            <person name="Maranhao A.Q."/>
            <person name="Martins W.S."/>
            <person name="di Mauro S.M.Z."/>
            <person name="de Medeiros S.R.B."/>
            <person name="Meissner R.V."/>
            <person name="Moreira M.A.M."/>
            <person name="Nascimento F.F."/>
            <person name="Nicolas M.F."/>
            <person name="Oliveira J.G."/>
            <person name="Oliveira S.C."/>
            <person name="Paixao R.F.C."/>
            <person name="Parente J.A."/>
            <person name="Pedrosa F.O."/>
            <person name="Pena S.D.J."/>
            <person name="Pereira J.O."/>
            <person name="Pereira M."/>
            <person name="Pinto L.S.R.C."/>
            <person name="Pinto L.S."/>
            <person name="Porto J.I.R."/>
            <person name="Potrich D.P."/>
            <person name="Ramalho-Neto C.E."/>
            <person name="Reis A.M.M."/>
            <person name="Rigo L.U."/>
            <person name="Rondinelli E."/>
            <person name="Santos E.B.P."/>
            <person name="Santos F.R."/>
            <person name="Schneider M.P.C."/>
            <person name="Seuanez H.N."/>
            <person name="Silva A.M.R."/>
            <person name="da Silva A.L.C."/>
            <person name="Silva D.W."/>
            <person name="Silva R."/>
            <person name="Simoes I.C."/>
            <person name="Simon D."/>
            <person name="Soares C.M.A."/>
            <person name="Soares R.B.A."/>
            <person name="Souza E.M."/>
            <person name="Souza K.R.L."/>
            <person name="Souza R.C."/>
            <person name="Steffens M.B.R."/>
            <person name="Steindel M."/>
            <person name="Teixeira S.R."/>
            <person name="Urmenyi T."/>
            <person name="Vettore A."/>
            <person name="Wassem R."/>
            <person name="Zaha A."/>
            <person name="Simpson A.J.G."/>
        </authorList>
    </citation>
    <scope>NUCLEOTIDE SEQUENCE [LARGE SCALE GENOMIC DNA]</scope>
    <source>
        <strain>ATCC 12472 / DSM 30191 / JCM 1249 / CCUG 213 / NBRC 12614 / NCIMB 9131 / NCTC 9757 / MK</strain>
    </source>
</reference>
<organism>
    <name type="scientific">Chromobacterium violaceum (strain ATCC 12472 / DSM 30191 / JCM 1249 / CCUG 213 / NBRC 12614 / NCIMB 9131 / NCTC 9757 / MK)</name>
    <dbReference type="NCBI Taxonomy" id="243365"/>
    <lineage>
        <taxon>Bacteria</taxon>
        <taxon>Pseudomonadati</taxon>
        <taxon>Pseudomonadota</taxon>
        <taxon>Betaproteobacteria</taxon>
        <taxon>Neisseriales</taxon>
        <taxon>Chromobacteriaceae</taxon>
        <taxon>Chromobacterium</taxon>
    </lineage>
</organism>
<gene>
    <name evidence="1" type="primary">tig</name>
    <name type="ordered locus">CV_2559</name>
</gene>
<feature type="chain" id="PRO_0000179336" description="Trigger factor">
    <location>
        <begin position="1"/>
        <end position="435"/>
    </location>
</feature>
<feature type="domain" description="PPIase FKBP-type" evidence="1">
    <location>
        <begin position="162"/>
        <end position="247"/>
    </location>
</feature>
<protein>
    <recommendedName>
        <fullName evidence="1">Trigger factor</fullName>
        <shortName evidence="1">TF</shortName>
        <ecNumber evidence="1">5.2.1.8</ecNumber>
    </recommendedName>
    <alternativeName>
        <fullName evidence="1">PPIase</fullName>
    </alternativeName>
</protein>
<dbReference type="EC" id="5.2.1.8" evidence="1"/>
<dbReference type="EMBL" id="AE016825">
    <property type="protein sequence ID" value="AAQ60229.1"/>
    <property type="molecule type" value="Genomic_DNA"/>
</dbReference>
<dbReference type="RefSeq" id="WP_011136106.1">
    <property type="nucleotide sequence ID" value="NC_005085.1"/>
</dbReference>
<dbReference type="SMR" id="Q7NUY8"/>
<dbReference type="STRING" id="243365.CV_2559"/>
<dbReference type="KEGG" id="cvi:CV_2559"/>
<dbReference type="eggNOG" id="COG0544">
    <property type="taxonomic scope" value="Bacteria"/>
</dbReference>
<dbReference type="HOGENOM" id="CLU_033058_2_0_4"/>
<dbReference type="OrthoDB" id="9767721at2"/>
<dbReference type="Proteomes" id="UP000001424">
    <property type="component" value="Chromosome"/>
</dbReference>
<dbReference type="GO" id="GO:0005737">
    <property type="term" value="C:cytoplasm"/>
    <property type="evidence" value="ECO:0007669"/>
    <property type="project" value="UniProtKB-SubCell"/>
</dbReference>
<dbReference type="GO" id="GO:0003755">
    <property type="term" value="F:peptidyl-prolyl cis-trans isomerase activity"/>
    <property type="evidence" value="ECO:0007669"/>
    <property type="project" value="UniProtKB-UniRule"/>
</dbReference>
<dbReference type="GO" id="GO:0044183">
    <property type="term" value="F:protein folding chaperone"/>
    <property type="evidence" value="ECO:0007669"/>
    <property type="project" value="TreeGrafter"/>
</dbReference>
<dbReference type="GO" id="GO:0043022">
    <property type="term" value="F:ribosome binding"/>
    <property type="evidence" value="ECO:0007669"/>
    <property type="project" value="TreeGrafter"/>
</dbReference>
<dbReference type="GO" id="GO:0051083">
    <property type="term" value="P:'de novo' cotranslational protein folding"/>
    <property type="evidence" value="ECO:0007669"/>
    <property type="project" value="TreeGrafter"/>
</dbReference>
<dbReference type="GO" id="GO:0051301">
    <property type="term" value="P:cell division"/>
    <property type="evidence" value="ECO:0007669"/>
    <property type="project" value="UniProtKB-KW"/>
</dbReference>
<dbReference type="GO" id="GO:0061077">
    <property type="term" value="P:chaperone-mediated protein folding"/>
    <property type="evidence" value="ECO:0007669"/>
    <property type="project" value="TreeGrafter"/>
</dbReference>
<dbReference type="GO" id="GO:0015031">
    <property type="term" value="P:protein transport"/>
    <property type="evidence" value="ECO:0007669"/>
    <property type="project" value="UniProtKB-UniRule"/>
</dbReference>
<dbReference type="GO" id="GO:0043335">
    <property type="term" value="P:protein unfolding"/>
    <property type="evidence" value="ECO:0007669"/>
    <property type="project" value="TreeGrafter"/>
</dbReference>
<dbReference type="FunFam" id="3.10.50.40:FF:000001">
    <property type="entry name" value="Trigger factor"/>
    <property type="match status" value="1"/>
</dbReference>
<dbReference type="Gene3D" id="3.10.50.40">
    <property type="match status" value="1"/>
</dbReference>
<dbReference type="Gene3D" id="3.30.70.1050">
    <property type="entry name" value="Trigger factor ribosome-binding domain"/>
    <property type="match status" value="1"/>
</dbReference>
<dbReference type="Gene3D" id="1.10.3120.10">
    <property type="entry name" value="Trigger factor, C-terminal domain"/>
    <property type="match status" value="1"/>
</dbReference>
<dbReference type="HAMAP" id="MF_00303">
    <property type="entry name" value="Trigger_factor_Tig"/>
    <property type="match status" value="1"/>
</dbReference>
<dbReference type="InterPro" id="IPR046357">
    <property type="entry name" value="PPIase_dom_sf"/>
</dbReference>
<dbReference type="InterPro" id="IPR001179">
    <property type="entry name" value="PPIase_FKBP_dom"/>
</dbReference>
<dbReference type="InterPro" id="IPR005215">
    <property type="entry name" value="Trig_fac"/>
</dbReference>
<dbReference type="InterPro" id="IPR008880">
    <property type="entry name" value="Trigger_fac_C"/>
</dbReference>
<dbReference type="InterPro" id="IPR037041">
    <property type="entry name" value="Trigger_fac_C_sf"/>
</dbReference>
<dbReference type="InterPro" id="IPR008881">
    <property type="entry name" value="Trigger_fac_ribosome-bd_bac"/>
</dbReference>
<dbReference type="InterPro" id="IPR036611">
    <property type="entry name" value="Trigger_fac_ribosome-bd_sf"/>
</dbReference>
<dbReference type="InterPro" id="IPR027304">
    <property type="entry name" value="Trigger_fact/SurA_dom_sf"/>
</dbReference>
<dbReference type="NCBIfam" id="TIGR00115">
    <property type="entry name" value="tig"/>
    <property type="match status" value="1"/>
</dbReference>
<dbReference type="PANTHER" id="PTHR30560">
    <property type="entry name" value="TRIGGER FACTOR CHAPERONE AND PEPTIDYL-PROLYL CIS/TRANS ISOMERASE"/>
    <property type="match status" value="1"/>
</dbReference>
<dbReference type="PANTHER" id="PTHR30560:SF3">
    <property type="entry name" value="TRIGGER FACTOR-LIKE PROTEIN TIG, CHLOROPLASTIC"/>
    <property type="match status" value="1"/>
</dbReference>
<dbReference type="Pfam" id="PF00254">
    <property type="entry name" value="FKBP_C"/>
    <property type="match status" value="1"/>
</dbReference>
<dbReference type="Pfam" id="PF05698">
    <property type="entry name" value="Trigger_C"/>
    <property type="match status" value="1"/>
</dbReference>
<dbReference type="Pfam" id="PF05697">
    <property type="entry name" value="Trigger_N"/>
    <property type="match status" value="1"/>
</dbReference>
<dbReference type="PIRSF" id="PIRSF003095">
    <property type="entry name" value="Trigger_factor"/>
    <property type="match status" value="1"/>
</dbReference>
<dbReference type="SUPFAM" id="SSF54534">
    <property type="entry name" value="FKBP-like"/>
    <property type="match status" value="1"/>
</dbReference>
<dbReference type="SUPFAM" id="SSF109998">
    <property type="entry name" value="Triger factor/SurA peptide-binding domain-like"/>
    <property type="match status" value="1"/>
</dbReference>
<dbReference type="SUPFAM" id="SSF102735">
    <property type="entry name" value="Trigger factor ribosome-binding domain"/>
    <property type="match status" value="1"/>
</dbReference>
<dbReference type="PROSITE" id="PS50059">
    <property type="entry name" value="FKBP_PPIASE"/>
    <property type="match status" value="1"/>
</dbReference>
<sequence length="435" mass="48576">MQVQLETLSNLERRMNIALPMAAIETQVAERLKRVARGAKIQGFRPGKAPLKIVEMNYGAQVREEVMGEQVQQGFYKAVTEQSLRVAGYPRFEPVAAGDDKESFKFAATFEIYPEVKVGELAGKEIEKPNTVVGDAEIEKTIDILRKQRTRYNRVEREAAEGDRVIIDFKGAIDGVAFEGGSSENFPFVLGQGQMLAEFEAGIVGAKEGDIKTVEVNFPEDYHGKDVAGKTAVFEILVKNVAEATLPEVNEEFAKALGISDGDVEKMRGEIRKNVEREVKRRLQARIKENVMQALIDATELELPKALVSLEIGRLVEQARRDMQQRGMNVKDMPFPPELFAAQAERRVKLGLILSEIVEANKLEAKPEQVRAMITEFADSYEQPEDVLAWYYESADRLEGPTSMVLEDNVVEFVLSQANVVAKDLSFDELMGSQA</sequence>
<name>TIG_CHRVO</name>